<protein>
    <recommendedName>
        <fullName evidence="1">NADH-quinone oxidoreductase subunit I</fullName>
        <ecNumber evidence="1">7.1.1.-</ecNumber>
    </recommendedName>
    <alternativeName>
        <fullName evidence="1">NADH dehydrogenase I subunit I</fullName>
    </alternativeName>
    <alternativeName>
        <fullName evidence="1">NDH-1 subunit I</fullName>
    </alternativeName>
</protein>
<comment type="function">
    <text evidence="1">NDH-1 shuttles electrons from NADH, via FMN and iron-sulfur (Fe-S) centers, to quinones in the respiratory chain. The immediate electron acceptor for the enzyme in this species is believed to be ubiquinone. Couples the redox reaction to proton translocation (for every two electrons transferred, four hydrogen ions are translocated across the cytoplasmic membrane), and thus conserves the redox energy in a proton gradient.</text>
</comment>
<comment type="catalytic activity">
    <reaction evidence="1">
        <text>a quinone + NADH + 5 H(+)(in) = a quinol + NAD(+) + 4 H(+)(out)</text>
        <dbReference type="Rhea" id="RHEA:57888"/>
        <dbReference type="ChEBI" id="CHEBI:15378"/>
        <dbReference type="ChEBI" id="CHEBI:24646"/>
        <dbReference type="ChEBI" id="CHEBI:57540"/>
        <dbReference type="ChEBI" id="CHEBI:57945"/>
        <dbReference type="ChEBI" id="CHEBI:132124"/>
    </reaction>
</comment>
<comment type="cofactor">
    <cofactor evidence="1">
        <name>[4Fe-4S] cluster</name>
        <dbReference type="ChEBI" id="CHEBI:49883"/>
    </cofactor>
    <text evidence="1">Binds 2 [4Fe-4S] clusters per subunit.</text>
</comment>
<comment type="subunit">
    <text evidence="1">NDH-1 is composed of 14 different subunits. Subunits NuoA, H, J, K, L, M, N constitute the membrane sector of the complex.</text>
</comment>
<comment type="subcellular location">
    <subcellularLocation>
        <location evidence="1">Cell inner membrane</location>
        <topology evidence="1">Peripheral membrane protein</topology>
    </subcellularLocation>
</comment>
<comment type="similarity">
    <text evidence="1">Belongs to the complex I 23 kDa subunit family.</text>
</comment>
<gene>
    <name evidence="1" type="primary">nuoI</name>
    <name type="ordered locus">H16_A1058</name>
</gene>
<dbReference type="EC" id="7.1.1.-" evidence="1"/>
<dbReference type="EMBL" id="AM260479">
    <property type="protein sequence ID" value="CAJ92199.1"/>
    <property type="molecule type" value="Genomic_DNA"/>
</dbReference>
<dbReference type="RefSeq" id="WP_010809124.1">
    <property type="nucleotide sequence ID" value="NZ_CP039287.1"/>
</dbReference>
<dbReference type="SMR" id="Q0KCS2"/>
<dbReference type="STRING" id="381666.H16_A1058"/>
<dbReference type="GeneID" id="29762864"/>
<dbReference type="KEGG" id="reh:H16_A1058"/>
<dbReference type="eggNOG" id="COG1143">
    <property type="taxonomic scope" value="Bacteria"/>
</dbReference>
<dbReference type="HOGENOM" id="CLU_067218_5_1_4"/>
<dbReference type="OrthoDB" id="9808559at2"/>
<dbReference type="Proteomes" id="UP000008210">
    <property type="component" value="Chromosome 1"/>
</dbReference>
<dbReference type="GO" id="GO:0005886">
    <property type="term" value="C:plasma membrane"/>
    <property type="evidence" value="ECO:0007669"/>
    <property type="project" value="UniProtKB-SubCell"/>
</dbReference>
<dbReference type="GO" id="GO:0051539">
    <property type="term" value="F:4 iron, 4 sulfur cluster binding"/>
    <property type="evidence" value="ECO:0007669"/>
    <property type="project" value="UniProtKB-KW"/>
</dbReference>
<dbReference type="GO" id="GO:0005506">
    <property type="term" value="F:iron ion binding"/>
    <property type="evidence" value="ECO:0007669"/>
    <property type="project" value="UniProtKB-UniRule"/>
</dbReference>
<dbReference type="GO" id="GO:0050136">
    <property type="term" value="F:NADH:ubiquinone reductase (non-electrogenic) activity"/>
    <property type="evidence" value="ECO:0007669"/>
    <property type="project" value="UniProtKB-UniRule"/>
</dbReference>
<dbReference type="GO" id="GO:0048038">
    <property type="term" value="F:quinone binding"/>
    <property type="evidence" value="ECO:0007669"/>
    <property type="project" value="UniProtKB-KW"/>
</dbReference>
<dbReference type="GO" id="GO:0009060">
    <property type="term" value="P:aerobic respiration"/>
    <property type="evidence" value="ECO:0007669"/>
    <property type="project" value="TreeGrafter"/>
</dbReference>
<dbReference type="FunFam" id="3.30.70.3270:FF:000003">
    <property type="entry name" value="NADH-quinone oxidoreductase subunit I"/>
    <property type="match status" value="1"/>
</dbReference>
<dbReference type="Gene3D" id="3.30.70.3270">
    <property type="match status" value="1"/>
</dbReference>
<dbReference type="HAMAP" id="MF_01351">
    <property type="entry name" value="NDH1_NuoI"/>
    <property type="match status" value="1"/>
</dbReference>
<dbReference type="InterPro" id="IPR017896">
    <property type="entry name" value="4Fe4S_Fe-S-bd"/>
</dbReference>
<dbReference type="InterPro" id="IPR017900">
    <property type="entry name" value="4Fe4S_Fe_S_CS"/>
</dbReference>
<dbReference type="InterPro" id="IPR010226">
    <property type="entry name" value="NADH_quinone_OxRdtase_chainI"/>
</dbReference>
<dbReference type="NCBIfam" id="TIGR01971">
    <property type="entry name" value="NuoI"/>
    <property type="match status" value="1"/>
</dbReference>
<dbReference type="NCBIfam" id="NF004538">
    <property type="entry name" value="PRK05888.1-4"/>
    <property type="match status" value="1"/>
</dbReference>
<dbReference type="NCBIfam" id="NF004539">
    <property type="entry name" value="PRK05888.1-5"/>
    <property type="match status" value="1"/>
</dbReference>
<dbReference type="PANTHER" id="PTHR10849:SF20">
    <property type="entry name" value="NADH DEHYDROGENASE [UBIQUINONE] IRON-SULFUR PROTEIN 8, MITOCHONDRIAL"/>
    <property type="match status" value="1"/>
</dbReference>
<dbReference type="PANTHER" id="PTHR10849">
    <property type="entry name" value="NADH DEHYDROGENASE UBIQUINONE IRON-SULFUR PROTEIN 8, MITOCHONDRIAL"/>
    <property type="match status" value="1"/>
</dbReference>
<dbReference type="Pfam" id="PF12838">
    <property type="entry name" value="Fer4_7"/>
    <property type="match status" value="1"/>
</dbReference>
<dbReference type="SUPFAM" id="SSF54862">
    <property type="entry name" value="4Fe-4S ferredoxins"/>
    <property type="match status" value="1"/>
</dbReference>
<dbReference type="PROSITE" id="PS00198">
    <property type="entry name" value="4FE4S_FER_1"/>
    <property type="match status" value="2"/>
</dbReference>
<dbReference type="PROSITE" id="PS51379">
    <property type="entry name" value="4FE4S_FER_2"/>
    <property type="match status" value="2"/>
</dbReference>
<accession>Q0KCS2</accession>
<reference key="1">
    <citation type="journal article" date="2006" name="Nat. Biotechnol.">
        <title>Genome sequence of the bioplastic-producing 'Knallgas' bacterium Ralstonia eutropha H16.</title>
        <authorList>
            <person name="Pohlmann A."/>
            <person name="Fricke W.F."/>
            <person name="Reinecke F."/>
            <person name="Kusian B."/>
            <person name="Liesegang H."/>
            <person name="Cramm R."/>
            <person name="Eitinger T."/>
            <person name="Ewering C."/>
            <person name="Poetter M."/>
            <person name="Schwartz E."/>
            <person name="Strittmatter A."/>
            <person name="Voss I."/>
            <person name="Gottschalk G."/>
            <person name="Steinbuechel A."/>
            <person name="Friedrich B."/>
            <person name="Bowien B."/>
        </authorList>
    </citation>
    <scope>NUCLEOTIDE SEQUENCE [LARGE SCALE GENOMIC DNA]</scope>
    <source>
        <strain>ATCC 17699 / DSM 428 / KCTC 22496 / NCIMB 10442 / H16 / Stanier 337</strain>
    </source>
</reference>
<sequence>MLLAIKDFFNSLLLKELFKGMALTGRYLFARKITVQFPEEKTPISPRFRGLHALRRYPNGEERCIACKLCEAVCPALAITIESDARADGTRRTTRYDIDLTKCIFCGFCEEACPVDAIVETQILEYHGEKRGDLYFTKDMLLAVGDRYEPQIAAAKAADAKYR</sequence>
<name>NUOI_CUPNH</name>
<proteinExistence type="inferred from homology"/>
<feature type="chain" id="PRO_0000298538" description="NADH-quinone oxidoreductase subunit I">
    <location>
        <begin position="1"/>
        <end position="163"/>
    </location>
</feature>
<feature type="domain" description="4Fe-4S ferredoxin-type 1" evidence="1">
    <location>
        <begin position="54"/>
        <end position="84"/>
    </location>
</feature>
<feature type="domain" description="4Fe-4S ferredoxin-type 2" evidence="1">
    <location>
        <begin position="94"/>
        <end position="123"/>
    </location>
</feature>
<feature type="binding site" evidence="1">
    <location>
        <position position="64"/>
    </location>
    <ligand>
        <name>[4Fe-4S] cluster</name>
        <dbReference type="ChEBI" id="CHEBI:49883"/>
        <label>1</label>
    </ligand>
</feature>
<feature type="binding site" evidence="1">
    <location>
        <position position="67"/>
    </location>
    <ligand>
        <name>[4Fe-4S] cluster</name>
        <dbReference type="ChEBI" id="CHEBI:49883"/>
        <label>1</label>
    </ligand>
</feature>
<feature type="binding site" evidence="1">
    <location>
        <position position="70"/>
    </location>
    <ligand>
        <name>[4Fe-4S] cluster</name>
        <dbReference type="ChEBI" id="CHEBI:49883"/>
        <label>1</label>
    </ligand>
</feature>
<feature type="binding site" evidence="1">
    <location>
        <position position="74"/>
    </location>
    <ligand>
        <name>[4Fe-4S] cluster</name>
        <dbReference type="ChEBI" id="CHEBI:49883"/>
        <label>2</label>
    </ligand>
</feature>
<feature type="binding site" evidence="1">
    <location>
        <position position="103"/>
    </location>
    <ligand>
        <name>[4Fe-4S] cluster</name>
        <dbReference type="ChEBI" id="CHEBI:49883"/>
        <label>2</label>
    </ligand>
</feature>
<feature type="binding site" evidence="1">
    <location>
        <position position="106"/>
    </location>
    <ligand>
        <name>[4Fe-4S] cluster</name>
        <dbReference type="ChEBI" id="CHEBI:49883"/>
        <label>2</label>
    </ligand>
</feature>
<feature type="binding site" evidence="1">
    <location>
        <position position="109"/>
    </location>
    <ligand>
        <name>[4Fe-4S] cluster</name>
        <dbReference type="ChEBI" id="CHEBI:49883"/>
        <label>2</label>
    </ligand>
</feature>
<feature type="binding site" evidence="1">
    <location>
        <position position="113"/>
    </location>
    <ligand>
        <name>[4Fe-4S] cluster</name>
        <dbReference type="ChEBI" id="CHEBI:49883"/>
        <label>1</label>
    </ligand>
</feature>
<keyword id="KW-0004">4Fe-4S</keyword>
<keyword id="KW-0997">Cell inner membrane</keyword>
<keyword id="KW-1003">Cell membrane</keyword>
<keyword id="KW-0408">Iron</keyword>
<keyword id="KW-0411">Iron-sulfur</keyword>
<keyword id="KW-0472">Membrane</keyword>
<keyword id="KW-0479">Metal-binding</keyword>
<keyword id="KW-0520">NAD</keyword>
<keyword id="KW-0874">Quinone</keyword>
<keyword id="KW-1185">Reference proteome</keyword>
<keyword id="KW-0677">Repeat</keyword>
<keyword id="KW-1278">Translocase</keyword>
<keyword id="KW-0830">Ubiquinone</keyword>
<evidence type="ECO:0000255" key="1">
    <source>
        <dbReference type="HAMAP-Rule" id="MF_01351"/>
    </source>
</evidence>
<organism>
    <name type="scientific">Cupriavidus necator (strain ATCC 17699 / DSM 428 / KCTC 22496 / NCIMB 10442 / H16 / Stanier 337)</name>
    <name type="common">Ralstonia eutropha</name>
    <dbReference type="NCBI Taxonomy" id="381666"/>
    <lineage>
        <taxon>Bacteria</taxon>
        <taxon>Pseudomonadati</taxon>
        <taxon>Pseudomonadota</taxon>
        <taxon>Betaproteobacteria</taxon>
        <taxon>Burkholderiales</taxon>
        <taxon>Burkholderiaceae</taxon>
        <taxon>Cupriavidus</taxon>
    </lineage>
</organism>